<dbReference type="EC" id="3.6.4.-" evidence="1"/>
<dbReference type="EMBL" id="AE001273">
    <property type="protein sequence ID" value="AAC67630.1"/>
    <property type="molecule type" value="Genomic_DNA"/>
</dbReference>
<dbReference type="PIR" id="C71565">
    <property type="entry name" value="C71565"/>
</dbReference>
<dbReference type="RefSeq" id="NP_219543.1">
    <property type="nucleotide sequence ID" value="NC_000117.1"/>
</dbReference>
<dbReference type="RefSeq" id="WP_009873512.1">
    <property type="nucleotide sequence ID" value="NC_000117.1"/>
</dbReference>
<dbReference type="SMR" id="O84044"/>
<dbReference type="FunCoup" id="O84044">
    <property type="interactions" value="198"/>
</dbReference>
<dbReference type="STRING" id="272561.CT_040"/>
<dbReference type="EnsemblBacteria" id="AAC67630">
    <property type="protein sequence ID" value="AAC67630"/>
    <property type="gene ID" value="CT_040"/>
</dbReference>
<dbReference type="GeneID" id="884059"/>
<dbReference type="KEGG" id="ctr:CT_040"/>
<dbReference type="PATRIC" id="fig|272561.5.peg.46"/>
<dbReference type="HOGENOM" id="CLU_055599_1_0_0"/>
<dbReference type="InParanoid" id="O84044"/>
<dbReference type="OrthoDB" id="9804478at2"/>
<dbReference type="Proteomes" id="UP000000431">
    <property type="component" value="Chromosome"/>
</dbReference>
<dbReference type="GO" id="GO:0005737">
    <property type="term" value="C:cytoplasm"/>
    <property type="evidence" value="ECO:0007669"/>
    <property type="project" value="UniProtKB-SubCell"/>
</dbReference>
<dbReference type="GO" id="GO:0048476">
    <property type="term" value="C:Holliday junction resolvase complex"/>
    <property type="evidence" value="ECO:0007669"/>
    <property type="project" value="UniProtKB-UniRule"/>
</dbReference>
<dbReference type="GO" id="GO:0005524">
    <property type="term" value="F:ATP binding"/>
    <property type="evidence" value="ECO:0007669"/>
    <property type="project" value="UniProtKB-UniRule"/>
</dbReference>
<dbReference type="GO" id="GO:0016887">
    <property type="term" value="F:ATP hydrolysis activity"/>
    <property type="evidence" value="ECO:0007669"/>
    <property type="project" value="InterPro"/>
</dbReference>
<dbReference type="GO" id="GO:0000400">
    <property type="term" value="F:four-way junction DNA binding"/>
    <property type="evidence" value="ECO:0007669"/>
    <property type="project" value="UniProtKB-UniRule"/>
</dbReference>
<dbReference type="GO" id="GO:0009378">
    <property type="term" value="F:four-way junction helicase activity"/>
    <property type="evidence" value="ECO:0007669"/>
    <property type="project" value="InterPro"/>
</dbReference>
<dbReference type="GO" id="GO:0006310">
    <property type="term" value="P:DNA recombination"/>
    <property type="evidence" value="ECO:0007669"/>
    <property type="project" value="UniProtKB-UniRule"/>
</dbReference>
<dbReference type="GO" id="GO:0006281">
    <property type="term" value="P:DNA repair"/>
    <property type="evidence" value="ECO:0007669"/>
    <property type="project" value="UniProtKB-UniRule"/>
</dbReference>
<dbReference type="CDD" id="cd00009">
    <property type="entry name" value="AAA"/>
    <property type="match status" value="1"/>
</dbReference>
<dbReference type="Gene3D" id="1.10.8.60">
    <property type="match status" value="1"/>
</dbReference>
<dbReference type="Gene3D" id="3.40.50.300">
    <property type="entry name" value="P-loop containing nucleotide triphosphate hydrolases"/>
    <property type="match status" value="1"/>
</dbReference>
<dbReference type="Gene3D" id="1.10.10.10">
    <property type="entry name" value="Winged helix-like DNA-binding domain superfamily/Winged helix DNA-binding domain"/>
    <property type="match status" value="1"/>
</dbReference>
<dbReference type="HAMAP" id="MF_00016">
    <property type="entry name" value="DNA_HJ_migration_RuvB"/>
    <property type="match status" value="1"/>
</dbReference>
<dbReference type="InterPro" id="IPR003593">
    <property type="entry name" value="AAA+_ATPase"/>
</dbReference>
<dbReference type="InterPro" id="IPR041445">
    <property type="entry name" value="AAA_lid_4"/>
</dbReference>
<dbReference type="InterPro" id="IPR004605">
    <property type="entry name" value="DNA_helicase_Holl-junc_RuvB"/>
</dbReference>
<dbReference type="InterPro" id="IPR027417">
    <property type="entry name" value="P-loop_NTPase"/>
</dbReference>
<dbReference type="InterPro" id="IPR008824">
    <property type="entry name" value="RuvB-like_N"/>
</dbReference>
<dbReference type="InterPro" id="IPR008823">
    <property type="entry name" value="RuvB_C"/>
</dbReference>
<dbReference type="InterPro" id="IPR036388">
    <property type="entry name" value="WH-like_DNA-bd_sf"/>
</dbReference>
<dbReference type="InterPro" id="IPR036390">
    <property type="entry name" value="WH_DNA-bd_sf"/>
</dbReference>
<dbReference type="NCBIfam" id="NF000868">
    <property type="entry name" value="PRK00080.1"/>
    <property type="match status" value="1"/>
</dbReference>
<dbReference type="NCBIfam" id="TIGR00635">
    <property type="entry name" value="ruvB"/>
    <property type="match status" value="1"/>
</dbReference>
<dbReference type="PANTHER" id="PTHR42848">
    <property type="match status" value="1"/>
</dbReference>
<dbReference type="PANTHER" id="PTHR42848:SF1">
    <property type="entry name" value="HOLLIDAY JUNCTION BRANCH MIGRATION COMPLEX SUBUNIT RUVB"/>
    <property type="match status" value="1"/>
</dbReference>
<dbReference type="Pfam" id="PF17864">
    <property type="entry name" value="AAA_lid_4"/>
    <property type="match status" value="1"/>
</dbReference>
<dbReference type="Pfam" id="PF05491">
    <property type="entry name" value="RuvB_C"/>
    <property type="match status" value="1"/>
</dbReference>
<dbReference type="Pfam" id="PF05496">
    <property type="entry name" value="RuvB_N"/>
    <property type="match status" value="1"/>
</dbReference>
<dbReference type="SMART" id="SM00382">
    <property type="entry name" value="AAA"/>
    <property type="match status" value="1"/>
</dbReference>
<dbReference type="SUPFAM" id="SSF52540">
    <property type="entry name" value="P-loop containing nucleoside triphosphate hydrolases"/>
    <property type="match status" value="1"/>
</dbReference>
<dbReference type="SUPFAM" id="SSF46785">
    <property type="entry name" value="Winged helix' DNA-binding domain"/>
    <property type="match status" value="1"/>
</dbReference>
<evidence type="ECO:0000255" key="1">
    <source>
        <dbReference type="HAMAP-Rule" id="MF_00016"/>
    </source>
</evidence>
<reference key="1">
    <citation type="journal article" date="1998" name="Science">
        <title>Genome sequence of an obligate intracellular pathogen of humans: Chlamydia trachomatis.</title>
        <authorList>
            <person name="Stephens R.S."/>
            <person name="Kalman S."/>
            <person name="Lammel C.J."/>
            <person name="Fan J."/>
            <person name="Marathe R."/>
            <person name="Aravind L."/>
            <person name="Mitchell W.P."/>
            <person name="Olinger L."/>
            <person name="Tatusov R.L."/>
            <person name="Zhao Q."/>
            <person name="Koonin E.V."/>
            <person name="Davis R.W."/>
        </authorList>
    </citation>
    <scope>NUCLEOTIDE SEQUENCE [LARGE SCALE GENOMIC DNA]</scope>
    <source>
        <strain>ATCC VR-885 / DSM 19411 / UW-3/Cx</strain>
    </source>
</reference>
<organism>
    <name type="scientific">Chlamydia trachomatis serovar D (strain ATCC VR-885 / DSM 19411 / UW-3/Cx)</name>
    <dbReference type="NCBI Taxonomy" id="272561"/>
    <lineage>
        <taxon>Bacteria</taxon>
        <taxon>Pseudomonadati</taxon>
        <taxon>Chlamydiota</taxon>
        <taxon>Chlamydiia</taxon>
        <taxon>Chlamydiales</taxon>
        <taxon>Chlamydiaceae</taxon>
        <taxon>Chlamydia/Chlamydophila group</taxon>
        <taxon>Chlamydia</taxon>
    </lineage>
</organism>
<comment type="function">
    <text evidence="1">The RuvA-RuvB-RuvC complex processes Holliday junction (HJ) DNA during genetic recombination and DNA repair, while the RuvA-RuvB complex plays an important role in the rescue of blocked DNA replication forks via replication fork reversal (RFR). RuvA specifically binds to HJ cruciform DNA, conferring on it an open structure. The RuvB hexamer acts as an ATP-dependent pump, pulling dsDNA into and through the RuvAB complex. RuvB forms 2 homohexamers on either side of HJ DNA bound by 1 or 2 RuvA tetramers; 4 subunits per hexamer contact DNA at a time. Coordinated motions by a converter formed by DNA-disengaged RuvB subunits stimulates ATP hydrolysis and nucleotide exchange. Immobilization of the converter enables RuvB to convert the ATP-contained energy into a lever motion, pulling 2 nucleotides of DNA out of the RuvA tetramer per ATP hydrolyzed, thus driving DNA branch migration. The RuvB motors rotate together with the DNA substrate, which together with the progressing nucleotide cycle form the mechanistic basis for DNA recombination by continuous HJ branch migration. Branch migration allows RuvC to scan DNA until it finds its consensus sequence, where it cleaves and resolves cruciform DNA.</text>
</comment>
<comment type="catalytic activity">
    <reaction evidence="1">
        <text>ATP + H2O = ADP + phosphate + H(+)</text>
        <dbReference type="Rhea" id="RHEA:13065"/>
        <dbReference type="ChEBI" id="CHEBI:15377"/>
        <dbReference type="ChEBI" id="CHEBI:15378"/>
        <dbReference type="ChEBI" id="CHEBI:30616"/>
        <dbReference type="ChEBI" id="CHEBI:43474"/>
        <dbReference type="ChEBI" id="CHEBI:456216"/>
    </reaction>
</comment>
<comment type="subunit">
    <text evidence="1">Homohexamer. Forms an RuvA(8)-RuvB(12)-Holliday junction (HJ) complex. HJ DNA is sandwiched between 2 RuvA tetramers; dsDNA enters through RuvA and exits via RuvB. An RuvB hexamer assembles on each DNA strand where it exits the tetramer. Each RuvB hexamer is contacted by two RuvA subunits (via domain III) on 2 adjacent RuvB subunits; this complex drives branch migration. In the full resolvosome a probable DNA-RuvA(4)-RuvB(12)-RuvC(2) complex forms which resolves the HJ.</text>
</comment>
<comment type="subcellular location">
    <subcellularLocation>
        <location evidence="1">Cytoplasm</location>
    </subcellularLocation>
</comment>
<comment type="domain">
    <text evidence="1">Has 3 domains, the large (RuvB-L) and small ATPase (RuvB-S) domains and the C-terminal head (RuvB-H) domain. The head domain binds DNA, while the ATPase domains jointly bind ATP, ADP or are empty depending on the state of the subunit in the translocation cycle. During a single DNA translocation step the structure of each domain remains the same, but their relative positions change.</text>
</comment>
<comment type="similarity">
    <text evidence="1">Belongs to the RuvB family.</text>
</comment>
<name>RUVB_CHLTR</name>
<proteinExistence type="inferred from homology"/>
<feature type="chain" id="PRO_0000165517" description="Holliday junction branch migration complex subunit RuvB">
    <location>
        <begin position="1"/>
        <end position="334"/>
    </location>
</feature>
<feature type="region of interest" description="Large ATPase domain (RuvB-L)" evidence="1">
    <location>
        <begin position="1"/>
        <end position="179"/>
    </location>
</feature>
<feature type="region of interest" description="Small ATPAse domain (RuvB-S)" evidence="1">
    <location>
        <begin position="180"/>
        <end position="250"/>
    </location>
</feature>
<feature type="region of interest" description="Head domain (RuvB-H)" evidence="1">
    <location>
        <begin position="253"/>
        <end position="334"/>
    </location>
</feature>
<feature type="binding site" evidence="1">
    <location>
        <position position="18"/>
    </location>
    <ligand>
        <name>ATP</name>
        <dbReference type="ChEBI" id="CHEBI:30616"/>
    </ligand>
</feature>
<feature type="binding site" evidence="1">
    <location>
        <position position="19"/>
    </location>
    <ligand>
        <name>ATP</name>
        <dbReference type="ChEBI" id="CHEBI:30616"/>
    </ligand>
</feature>
<feature type="binding site" evidence="1">
    <location>
        <position position="60"/>
    </location>
    <ligand>
        <name>ATP</name>
        <dbReference type="ChEBI" id="CHEBI:30616"/>
    </ligand>
</feature>
<feature type="binding site" evidence="1">
    <location>
        <position position="63"/>
    </location>
    <ligand>
        <name>ATP</name>
        <dbReference type="ChEBI" id="CHEBI:30616"/>
    </ligand>
</feature>
<feature type="binding site" evidence="1">
    <location>
        <position position="64"/>
    </location>
    <ligand>
        <name>ATP</name>
        <dbReference type="ChEBI" id="CHEBI:30616"/>
    </ligand>
</feature>
<feature type="binding site" evidence="1">
    <location>
        <position position="64"/>
    </location>
    <ligand>
        <name>Mg(2+)</name>
        <dbReference type="ChEBI" id="CHEBI:18420"/>
    </ligand>
</feature>
<feature type="binding site" evidence="1">
    <location>
        <position position="65"/>
    </location>
    <ligand>
        <name>ATP</name>
        <dbReference type="ChEBI" id="CHEBI:30616"/>
    </ligand>
</feature>
<feature type="binding site" evidence="1">
    <location>
        <begin position="126"/>
        <end position="128"/>
    </location>
    <ligand>
        <name>ATP</name>
        <dbReference type="ChEBI" id="CHEBI:30616"/>
    </ligand>
</feature>
<feature type="binding site" evidence="1">
    <location>
        <position position="169"/>
    </location>
    <ligand>
        <name>ATP</name>
        <dbReference type="ChEBI" id="CHEBI:30616"/>
    </ligand>
</feature>
<feature type="binding site" evidence="1">
    <location>
        <position position="179"/>
    </location>
    <ligand>
        <name>ATP</name>
        <dbReference type="ChEBI" id="CHEBI:30616"/>
    </ligand>
</feature>
<feature type="binding site" evidence="1">
    <location>
        <position position="216"/>
    </location>
    <ligand>
        <name>ATP</name>
        <dbReference type="ChEBI" id="CHEBI:30616"/>
    </ligand>
</feature>
<feature type="binding site" evidence="1">
    <location>
        <position position="308"/>
    </location>
    <ligand>
        <name>DNA</name>
        <dbReference type="ChEBI" id="CHEBI:16991"/>
    </ligand>
</feature>
<feature type="binding site" evidence="1">
    <location>
        <position position="313"/>
    </location>
    <ligand>
        <name>DNA</name>
        <dbReference type="ChEBI" id="CHEBI:16991"/>
    </ligand>
</feature>
<accession>O84044</accession>
<keyword id="KW-0067">ATP-binding</keyword>
<keyword id="KW-0963">Cytoplasm</keyword>
<keyword id="KW-0227">DNA damage</keyword>
<keyword id="KW-0233">DNA recombination</keyword>
<keyword id="KW-0234">DNA repair</keyword>
<keyword id="KW-0238">DNA-binding</keyword>
<keyword id="KW-0378">Hydrolase</keyword>
<keyword id="KW-0547">Nucleotide-binding</keyword>
<keyword id="KW-1185">Reference proteome</keyword>
<sequence>MTHKISVLHQDKKFDFSLRPKKLTEFCGQKQLKERLDLFLRAAVQRNEVPGHCLFYGPPGLGKTSLAHIMANTIGKGLVIASGPQLLKPSDLIGLLTGLQEGDIFFIDEIHRMGKAAEEYLYPAMEDFKVDITLDSGPGARSVRLDLAPFTLVGATTRAGMLSEPLRTRFAFTGRVDYYTDEDLVSILSRSSQLLAIEANQETLLEIARRARGTPRLANNLLRWVRDFAQMREGNCINSAVAEKALAMLLIDNLGLNEIDIKLLSVMIDFYQGGPVGMKTLAMAVGEDVRTLEDMYEPFLILKGLVQRTARGRVATPLAYEHLNRNPKDRWGEE</sequence>
<protein>
    <recommendedName>
        <fullName evidence="1">Holliday junction branch migration complex subunit RuvB</fullName>
        <ecNumber evidence="1">3.6.4.-</ecNumber>
    </recommendedName>
</protein>
<gene>
    <name evidence="1" type="primary">ruvB</name>
    <name type="ordered locus">CT_040</name>
</gene>